<dbReference type="EMBL" id="Z70312">
    <property type="protein sequence ID" value="CAA94382.1"/>
    <property type="molecule type" value="Genomic_DNA"/>
</dbReference>
<dbReference type="PIR" id="T27502">
    <property type="entry name" value="T27502"/>
</dbReference>
<dbReference type="RefSeq" id="NP_501989.1">
    <property type="nucleotide sequence ID" value="NM_069588.6"/>
</dbReference>
<dbReference type="PDB" id="1M1S">
    <property type="method" value="X-ray"/>
    <property type="resolution" value="1.80 A"/>
    <property type="chains" value="A=1-107"/>
</dbReference>
<dbReference type="PDBsum" id="1M1S"/>
<dbReference type="SMR" id="Q23246"/>
<dbReference type="BioGRID" id="43067">
    <property type="interactions" value="1"/>
</dbReference>
<dbReference type="FunCoup" id="Q23246">
    <property type="interactions" value="6"/>
</dbReference>
<dbReference type="IntAct" id="Q23246">
    <property type="interactions" value="1"/>
</dbReference>
<dbReference type="STRING" id="6239.ZC168.6.1"/>
<dbReference type="PaxDb" id="6239-ZC168.6"/>
<dbReference type="PeptideAtlas" id="Q23246"/>
<dbReference type="EnsemblMetazoa" id="ZC168.6.1">
    <property type="protein sequence ID" value="ZC168.6.1"/>
    <property type="gene ID" value="WBGene00013858"/>
</dbReference>
<dbReference type="GeneID" id="177966"/>
<dbReference type="KEGG" id="cel:CELE_ZC168.6"/>
<dbReference type="UCSC" id="ZC168.6">
    <property type="organism name" value="c. elegans"/>
</dbReference>
<dbReference type="AGR" id="WB:WBGene00013858"/>
<dbReference type="CTD" id="177966"/>
<dbReference type="WormBase" id="ZC168.6">
    <property type="protein sequence ID" value="CE06572"/>
    <property type="gene ID" value="WBGene00013858"/>
    <property type="gene designation" value="ssp-34"/>
</dbReference>
<dbReference type="eggNOG" id="ENOG502S66Y">
    <property type="taxonomic scope" value="Eukaryota"/>
</dbReference>
<dbReference type="GeneTree" id="ENSGT00970000195921"/>
<dbReference type="HOGENOM" id="CLU_147608_0_1_1"/>
<dbReference type="InParanoid" id="Q23246"/>
<dbReference type="OMA" id="AMNIDPP"/>
<dbReference type="OrthoDB" id="75724at2759"/>
<dbReference type="PhylomeDB" id="Q23246"/>
<dbReference type="EvolutionaryTrace" id="Q23246"/>
<dbReference type="PRO" id="PR:Q23246"/>
<dbReference type="Proteomes" id="UP000001940">
    <property type="component" value="Chromosome IV"/>
</dbReference>
<dbReference type="Bgee" id="WBGene00013858">
    <property type="expression patterns" value="Expressed in material anatomical entity and 2 other cell types or tissues"/>
</dbReference>
<dbReference type="Gene3D" id="2.60.40.10">
    <property type="entry name" value="Immunoglobulins"/>
    <property type="match status" value="1"/>
</dbReference>
<dbReference type="InterPro" id="IPR013783">
    <property type="entry name" value="Ig-like_fold"/>
</dbReference>
<dbReference type="InterPro" id="IPR000535">
    <property type="entry name" value="MSP_dom"/>
</dbReference>
<dbReference type="InterPro" id="IPR008962">
    <property type="entry name" value="PapD-like_sf"/>
</dbReference>
<dbReference type="InterPro" id="IPR051774">
    <property type="entry name" value="Sperm-specific_class_P"/>
</dbReference>
<dbReference type="PANTHER" id="PTHR22947">
    <property type="entry name" value="MAJOR SPERM PROTEIN"/>
    <property type="match status" value="1"/>
</dbReference>
<dbReference type="PANTHER" id="PTHR22947:SF37">
    <property type="entry name" value="MSP DOMAIN-CONTAINING PROTEIN-RELATED"/>
    <property type="match status" value="1"/>
</dbReference>
<dbReference type="Pfam" id="PF00635">
    <property type="entry name" value="Motile_Sperm"/>
    <property type="match status" value="1"/>
</dbReference>
<dbReference type="SUPFAM" id="SSF49354">
    <property type="entry name" value="PapD-like"/>
    <property type="match status" value="1"/>
</dbReference>
<dbReference type="PROSITE" id="PS50202">
    <property type="entry name" value="MSP"/>
    <property type="match status" value="1"/>
</dbReference>
<feature type="chain" id="PRO_0000213453" description="Sperm-specific class P protein 34">
    <location>
        <begin position="1"/>
        <end position="107"/>
    </location>
</feature>
<feature type="domain" description="MSP" evidence="1">
    <location>
        <begin position="1"/>
        <end position="107"/>
    </location>
</feature>
<feature type="region of interest" description="Disordered" evidence="2">
    <location>
        <begin position="1"/>
        <end position="26"/>
    </location>
</feature>
<feature type="compositionally biased region" description="Polar residues" evidence="2">
    <location>
        <begin position="15"/>
        <end position="25"/>
    </location>
</feature>
<feature type="strand" evidence="4">
    <location>
        <begin position="1"/>
        <end position="12"/>
    </location>
</feature>
<feature type="strand" evidence="4">
    <location>
        <begin position="16"/>
        <end position="24"/>
    </location>
</feature>
<feature type="strand" evidence="4">
    <location>
        <begin position="26"/>
        <end position="37"/>
    </location>
</feature>
<feature type="turn" evidence="4">
    <location>
        <begin position="39"/>
        <end position="41"/>
    </location>
</feature>
<feature type="strand" evidence="4">
    <location>
        <begin position="42"/>
        <end position="45"/>
    </location>
</feature>
<feature type="strand" evidence="4">
    <location>
        <begin position="47"/>
        <end position="51"/>
    </location>
</feature>
<feature type="strand" evidence="4">
    <location>
        <begin position="56"/>
        <end position="63"/>
    </location>
</feature>
<feature type="strand" evidence="4">
    <location>
        <begin position="70"/>
        <end position="80"/>
    </location>
</feature>
<feature type="helix" evidence="4">
    <location>
        <begin position="89"/>
        <end position="92"/>
    </location>
</feature>
<feature type="strand" evidence="4">
    <location>
        <begin position="98"/>
        <end position="107"/>
    </location>
</feature>
<proteinExistence type="evidence at protein level"/>
<evidence type="ECO:0000255" key="1">
    <source>
        <dbReference type="PROSITE-ProRule" id="PRU00132"/>
    </source>
</evidence>
<evidence type="ECO:0000256" key="2">
    <source>
        <dbReference type="SAM" id="MobiDB-lite"/>
    </source>
</evidence>
<evidence type="ECO:0000269" key="3">
    <source>
    </source>
</evidence>
<evidence type="ECO:0007829" key="4">
    <source>
        <dbReference type="PDB" id="1M1S"/>
    </source>
</evidence>
<reference key="1">
    <citation type="journal article" date="1998" name="Science">
        <title>Genome sequence of the nematode C. elegans: a platform for investigating biology.</title>
        <authorList>
            <consortium name="The C. elegans sequencing consortium"/>
        </authorList>
    </citation>
    <scope>NUCLEOTIDE SEQUENCE [LARGE SCALE GENOMIC DNA]</scope>
    <source>
        <strain>Bristol N2</strain>
    </source>
</reference>
<reference key="2">
    <citation type="journal article" date="2004" name="Mol. Biochem. Parasitol.">
        <title>MSP domain proteins show enhanced expression in male germ line cells.</title>
        <authorList>
            <person name="Tarr D.E.K."/>
            <person name="Scott A.L."/>
        </authorList>
    </citation>
    <scope>TISSUE SPECIFICITY</scope>
</reference>
<reference key="3">
    <citation type="submission" date="2002-06" db="PDB data bank">
        <authorList>
            <consortium name="Northeast structural genomics consortium (NESG)"/>
        </authorList>
    </citation>
    <scope>X-RAY CRYSTALLOGRAPHY (1.8 ANGSTROMS)</scope>
</reference>
<accession>Q23246</accession>
<gene>
    <name type="primary">ssp-34</name>
    <name type="ORF">ZC168.6</name>
</gene>
<comment type="tissue specificity">
    <text evidence="3">Expressed at higher level in testis.</text>
</comment>
<organism>
    <name type="scientific">Caenorhabditis elegans</name>
    <dbReference type="NCBI Taxonomy" id="6239"/>
    <lineage>
        <taxon>Eukaryota</taxon>
        <taxon>Metazoa</taxon>
        <taxon>Ecdysozoa</taxon>
        <taxon>Nematoda</taxon>
        <taxon>Chromadorea</taxon>
        <taxon>Rhabditida</taxon>
        <taxon>Rhabditina</taxon>
        <taxon>Rhabditomorpha</taxon>
        <taxon>Rhabditoidea</taxon>
        <taxon>Rhabditidae</taxon>
        <taxon>Peloderinae</taxon>
        <taxon>Caenorhabditis</taxon>
    </lineage>
</organism>
<protein>
    <recommendedName>
        <fullName>Sperm-specific class P protein 34</fullName>
    </recommendedName>
</protein>
<keyword id="KW-0002">3D-structure</keyword>
<keyword id="KW-1185">Reference proteome</keyword>
<name>SSP34_CAEEL</name>
<sequence length="107" mass="11609">MINVDPPTGNYPATGGNSTHNITSESDSRLAFKVKSSNNEHYRVRPVYGFVDAKGKSKLDINRLPGPPKEDKIVIQYAEVPAEETDPMAPFKAGAQQGEIIVKLIAA</sequence>